<protein>
    <recommendedName>
        <fullName evidence="1">UPF0352 protein YejL</fullName>
    </recommendedName>
</protein>
<proteinExistence type="inferred from homology"/>
<accession>A7ZP12</accession>
<organism>
    <name type="scientific">Escherichia coli O139:H28 (strain E24377A / ETEC)</name>
    <dbReference type="NCBI Taxonomy" id="331111"/>
    <lineage>
        <taxon>Bacteria</taxon>
        <taxon>Pseudomonadati</taxon>
        <taxon>Pseudomonadota</taxon>
        <taxon>Gammaproteobacteria</taxon>
        <taxon>Enterobacterales</taxon>
        <taxon>Enterobacteriaceae</taxon>
        <taxon>Escherichia</taxon>
    </lineage>
</organism>
<dbReference type="EMBL" id="CP000800">
    <property type="protein sequence ID" value="ABV18618.1"/>
    <property type="molecule type" value="Genomic_DNA"/>
</dbReference>
<dbReference type="RefSeq" id="WP_001135669.1">
    <property type="nucleotide sequence ID" value="NC_009801.1"/>
</dbReference>
<dbReference type="BMRB" id="A7ZP12"/>
<dbReference type="SMR" id="A7ZP12"/>
<dbReference type="KEGG" id="ecw:EcE24377A_2486"/>
<dbReference type="HOGENOM" id="CLU_175457_0_0_6"/>
<dbReference type="Proteomes" id="UP000001122">
    <property type="component" value="Chromosome"/>
</dbReference>
<dbReference type="FunFam" id="1.10.3390.10:FF:000001">
    <property type="entry name" value="UPF0352 protein YejL"/>
    <property type="match status" value="1"/>
</dbReference>
<dbReference type="Gene3D" id="1.10.3390.10">
    <property type="entry name" value="YejL-like"/>
    <property type="match status" value="1"/>
</dbReference>
<dbReference type="HAMAP" id="MF_00816">
    <property type="entry name" value="UPF0352"/>
    <property type="match status" value="1"/>
</dbReference>
<dbReference type="InterPro" id="IPR009857">
    <property type="entry name" value="UPF0352"/>
</dbReference>
<dbReference type="InterPro" id="IPR023202">
    <property type="entry name" value="YejL_sf"/>
</dbReference>
<dbReference type="NCBIfam" id="NF010242">
    <property type="entry name" value="PRK13689.1"/>
    <property type="match status" value="1"/>
</dbReference>
<dbReference type="Pfam" id="PF07208">
    <property type="entry name" value="DUF1414"/>
    <property type="match status" value="1"/>
</dbReference>
<dbReference type="PIRSF" id="PIRSF006188">
    <property type="entry name" value="UCP006188"/>
    <property type="match status" value="1"/>
</dbReference>
<dbReference type="SUPFAM" id="SSF158651">
    <property type="entry name" value="YejL-like"/>
    <property type="match status" value="1"/>
</dbReference>
<sequence>MPQISRYSDEQVEQLLAELLNVLEKHKAPTDLSLMVLGNMVTNLINTSIASAQRQAIANSFARALQSSINEDKAH</sequence>
<gene>
    <name evidence="1" type="primary">yejL</name>
    <name type="ordered locus">EcE24377A_2486</name>
</gene>
<feature type="chain" id="PRO_1000062300" description="UPF0352 protein YejL">
    <location>
        <begin position="1"/>
        <end position="75"/>
    </location>
</feature>
<keyword id="KW-1185">Reference proteome</keyword>
<comment type="similarity">
    <text evidence="1">Belongs to the UPF0352 family.</text>
</comment>
<name>YEJL_ECO24</name>
<evidence type="ECO:0000255" key="1">
    <source>
        <dbReference type="HAMAP-Rule" id="MF_00816"/>
    </source>
</evidence>
<reference key="1">
    <citation type="journal article" date="2008" name="J. Bacteriol.">
        <title>The pangenome structure of Escherichia coli: comparative genomic analysis of E. coli commensal and pathogenic isolates.</title>
        <authorList>
            <person name="Rasko D.A."/>
            <person name="Rosovitz M.J."/>
            <person name="Myers G.S.A."/>
            <person name="Mongodin E.F."/>
            <person name="Fricke W.F."/>
            <person name="Gajer P."/>
            <person name="Crabtree J."/>
            <person name="Sebaihia M."/>
            <person name="Thomson N.R."/>
            <person name="Chaudhuri R."/>
            <person name="Henderson I.R."/>
            <person name="Sperandio V."/>
            <person name="Ravel J."/>
        </authorList>
    </citation>
    <scope>NUCLEOTIDE SEQUENCE [LARGE SCALE GENOMIC DNA]</scope>
    <source>
        <strain>E24377A / ETEC</strain>
    </source>
</reference>